<sequence>MNVKRKRVIVGMSGGVDSSVAALLLKKQGYDVIGIFMKYYNFECPWREDSIDAMLVSQSLKIPFYIIDITKNYKNLIIDYLYKEYKKGYTPNPDIICNSKIKFKFFLEKSIFLKSDFIATGHYVRKKEINENGKISYKIISGIDSNKDQSYFLCKLNKVQIKKSIFPLGWLNKKEVREIANKYNLINANKKDSQGICFIGKIKFLNFLKKKLAEKKGIIIEINKNSHIFKYKQKKLFSKKIEYKKEYGKIIGHHIGAHYFTKGQRKGLKIGGYKYPLFVIEKDITKNILYVGMGKNHPGLYTKVICIKKYNIHWINKKKIKTKIEVECRIRYRQNFKKATLYKKNNDLYVEFEIPQLAVNGGQFIVWYINNEVIGSGLIS</sequence>
<accession>A8Z5W4</accession>
<name>MNMA_KARMG</name>
<dbReference type="EC" id="2.8.1.13" evidence="1"/>
<dbReference type="EMBL" id="CP000770">
    <property type="protein sequence ID" value="ABS30515.1"/>
    <property type="molecule type" value="Genomic_DNA"/>
</dbReference>
<dbReference type="SMR" id="A8Z5W4"/>
<dbReference type="STRING" id="444179.SMGWSS_100"/>
<dbReference type="KEGG" id="smg:SMGWSS_100"/>
<dbReference type="HOGENOM" id="CLU_035188_1_0_10"/>
<dbReference type="Proteomes" id="UP000000781">
    <property type="component" value="Chromosome"/>
</dbReference>
<dbReference type="GO" id="GO:0005737">
    <property type="term" value="C:cytoplasm"/>
    <property type="evidence" value="ECO:0007669"/>
    <property type="project" value="UniProtKB-SubCell"/>
</dbReference>
<dbReference type="GO" id="GO:0005524">
    <property type="term" value="F:ATP binding"/>
    <property type="evidence" value="ECO:0007669"/>
    <property type="project" value="UniProtKB-KW"/>
</dbReference>
<dbReference type="GO" id="GO:0000049">
    <property type="term" value="F:tRNA binding"/>
    <property type="evidence" value="ECO:0007669"/>
    <property type="project" value="UniProtKB-KW"/>
</dbReference>
<dbReference type="GO" id="GO:0103016">
    <property type="term" value="F:tRNA-uridine 2-sulfurtransferase activity"/>
    <property type="evidence" value="ECO:0007669"/>
    <property type="project" value="UniProtKB-EC"/>
</dbReference>
<dbReference type="GO" id="GO:0002143">
    <property type="term" value="P:tRNA wobble position uridine thiolation"/>
    <property type="evidence" value="ECO:0007669"/>
    <property type="project" value="TreeGrafter"/>
</dbReference>
<dbReference type="CDD" id="cd01998">
    <property type="entry name" value="MnmA_TRMU-like"/>
    <property type="match status" value="1"/>
</dbReference>
<dbReference type="Gene3D" id="2.30.30.280">
    <property type="entry name" value="Adenine nucleotide alpha hydrolases-like domains"/>
    <property type="match status" value="1"/>
</dbReference>
<dbReference type="Gene3D" id="3.40.50.620">
    <property type="entry name" value="HUPs"/>
    <property type="match status" value="1"/>
</dbReference>
<dbReference type="Gene3D" id="2.40.30.10">
    <property type="entry name" value="Translation factors"/>
    <property type="match status" value="1"/>
</dbReference>
<dbReference type="HAMAP" id="MF_00144">
    <property type="entry name" value="tRNA_thiouridyl_MnmA"/>
    <property type="match status" value="1"/>
</dbReference>
<dbReference type="InterPro" id="IPR004506">
    <property type="entry name" value="MnmA-like"/>
</dbReference>
<dbReference type="InterPro" id="IPR046885">
    <property type="entry name" value="MnmA-like_C"/>
</dbReference>
<dbReference type="InterPro" id="IPR046884">
    <property type="entry name" value="MnmA-like_central"/>
</dbReference>
<dbReference type="InterPro" id="IPR023382">
    <property type="entry name" value="MnmA-like_central_sf"/>
</dbReference>
<dbReference type="InterPro" id="IPR014729">
    <property type="entry name" value="Rossmann-like_a/b/a_fold"/>
</dbReference>
<dbReference type="NCBIfam" id="NF001138">
    <property type="entry name" value="PRK00143.1"/>
    <property type="match status" value="1"/>
</dbReference>
<dbReference type="NCBIfam" id="TIGR00420">
    <property type="entry name" value="trmU"/>
    <property type="match status" value="1"/>
</dbReference>
<dbReference type="PANTHER" id="PTHR11933:SF5">
    <property type="entry name" value="MITOCHONDRIAL TRNA-SPECIFIC 2-THIOURIDYLASE 1"/>
    <property type="match status" value="1"/>
</dbReference>
<dbReference type="PANTHER" id="PTHR11933">
    <property type="entry name" value="TRNA 5-METHYLAMINOMETHYL-2-THIOURIDYLATE -METHYLTRANSFERASE"/>
    <property type="match status" value="1"/>
</dbReference>
<dbReference type="Pfam" id="PF03054">
    <property type="entry name" value="tRNA_Me_trans"/>
    <property type="match status" value="1"/>
</dbReference>
<dbReference type="Pfam" id="PF20258">
    <property type="entry name" value="tRNA_Me_trans_C"/>
    <property type="match status" value="1"/>
</dbReference>
<dbReference type="Pfam" id="PF20259">
    <property type="entry name" value="tRNA_Me_trans_M"/>
    <property type="match status" value="1"/>
</dbReference>
<dbReference type="SUPFAM" id="SSF52402">
    <property type="entry name" value="Adenine nucleotide alpha hydrolases-like"/>
    <property type="match status" value="1"/>
</dbReference>
<feature type="chain" id="PRO_0000349819" description="tRNA-specific 2-thiouridylase MnmA">
    <location>
        <begin position="1"/>
        <end position="380"/>
    </location>
</feature>
<feature type="region of interest" description="Interaction with target base in tRNA" evidence="1">
    <location>
        <begin position="92"/>
        <end position="94"/>
    </location>
</feature>
<feature type="region of interest" description="Interaction with tRNA" evidence="1">
    <location>
        <begin position="147"/>
        <end position="149"/>
    </location>
</feature>
<feature type="region of interest" description="Interaction with tRNA" evidence="1">
    <location>
        <begin position="331"/>
        <end position="332"/>
    </location>
</feature>
<feature type="active site" description="Nucleophile" evidence="1">
    <location>
        <position position="97"/>
    </location>
</feature>
<feature type="active site" description="Cysteine persulfide intermediate" evidence="1">
    <location>
        <position position="197"/>
    </location>
</feature>
<feature type="binding site" evidence="1">
    <location>
        <begin position="11"/>
        <end position="18"/>
    </location>
    <ligand>
        <name>ATP</name>
        <dbReference type="ChEBI" id="CHEBI:30616"/>
    </ligand>
</feature>
<feature type="binding site" evidence="1">
    <location>
        <position position="37"/>
    </location>
    <ligand>
        <name>ATP</name>
        <dbReference type="ChEBI" id="CHEBI:30616"/>
    </ligand>
</feature>
<feature type="binding site" evidence="1">
    <location>
        <position position="121"/>
    </location>
    <ligand>
        <name>ATP</name>
        <dbReference type="ChEBI" id="CHEBI:30616"/>
    </ligand>
</feature>
<feature type="site" description="Interaction with tRNA" evidence="1">
    <location>
        <position position="122"/>
    </location>
</feature>
<feature type="site" description="Interaction with tRNA" evidence="1">
    <location>
        <position position="363"/>
    </location>
</feature>
<feature type="disulfide bond" description="Alternate" evidence="1">
    <location>
        <begin position="97"/>
        <end position="197"/>
    </location>
</feature>
<reference key="1">
    <citation type="journal article" date="2007" name="Proc. Natl. Acad. Sci. U.S.A.">
        <title>Parallel genomic evolution and metabolic interdependence in an ancient symbiosis.</title>
        <authorList>
            <person name="McCutcheon J.P."/>
            <person name="Moran N.A."/>
        </authorList>
    </citation>
    <scope>NUCLEOTIDE SEQUENCE [LARGE SCALE GENOMIC DNA]</scope>
    <source>
        <strain>GWSS</strain>
    </source>
</reference>
<organism>
    <name type="scientific">Karelsulcia muelleri (strain GWSS)</name>
    <name type="common">Sulcia muelleri</name>
    <dbReference type="NCBI Taxonomy" id="444179"/>
    <lineage>
        <taxon>Bacteria</taxon>
        <taxon>Pseudomonadati</taxon>
        <taxon>Bacteroidota</taxon>
        <taxon>Flavobacteriia</taxon>
        <taxon>Flavobacteriales</taxon>
        <taxon>Candidatus Karelsulcia</taxon>
    </lineage>
</organism>
<evidence type="ECO:0000255" key="1">
    <source>
        <dbReference type="HAMAP-Rule" id="MF_00144"/>
    </source>
</evidence>
<comment type="function">
    <text evidence="1">Catalyzes the 2-thiolation of uridine at the wobble position (U34) of tRNA, leading to the formation of s(2)U34.</text>
</comment>
<comment type="catalytic activity">
    <reaction evidence="1">
        <text>S-sulfanyl-L-cysteinyl-[protein] + uridine(34) in tRNA + AH2 + ATP = 2-thiouridine(34) in tRNA + L-cysteinyl-[protein] + A + AMP + diphosphate + H(+)</text>
        <dbReference type="Rhea" id="RHEA:47032"/>
        <dbReference type="Rhea" id="RHEA-COMP:10131"/>
        <dbReference type="Rhea" id="RHEA-COMP:11726"/>
        <dbReference type="Rhea" id="RHEA-COMP:11727"/>
        <dbReference type="Rhea" id="RHEA-COMP:11728"/>
        <dbReference type="ChEBI" id="CHEBI:13193"/>
        <dbReference type="ChEBI" id="CHEBI:15378"/>
        <dbReference type="ChEBI" id="CHEBI:17499"/>
        <dbReference type="ChEBI" id="CHEBI:29950"/>
        <dbReference type="ChEBI" id="CHEBI:30616"/>
        <dbReference type="ChEBI" id="CHEBI:33019"/>
        <dbReference type="ChEBI" id="CHEBI:61963"/>
        <dbReference type="ChEBI" id="CHEBI:65315"/>
        <dbReference type="ChEBI" id="CHEBI:87170"/>
        <dbReference type="ChEBI" id="CHEBI:456215"/>
        <dbReference type="EC" id="2.8.1.13"/>
    </reaction>
</comment>
<comment type="subcellular location">
    <subcellularLocation>
        <location evidence="1">Cytoplasm</location>
    </subcellularLocation>
</comment>
<comment type="similarity">
    <text evidence="1">Belongs to the MnmA/TRMU family.</text>
</comment>
<gene>
    <name evidence="1" type="primary">mnmA</name>
    <name type="ordered locus">SMGWSS_100</name>
</gene>
<keyword id="KW-0067">ATP-binding</keyword>
<keyword id="KW-0963">Cytoplasm</keyword>
<keyword id="KW-1015">Disulfide bond</keyword>
<keyword id="KW-0547">Nucleotide-binding</keyword>
<keyword id="KW-0694">RNA-binding</keyword>
<keyword id="KW-0808">Transferase</keyword>
<keyword id="KW-0819">tRNA processing</keyword>
<keyword id="KW-0820">tRNA-binding</keyword>
<proteinExistence type="inferred from homology"/>
<protein>
    <recommendedName>
        <fullName evidence="1">tRNA-specific 2-thiouridylase MnmA</fullName>
        <ecNumber evidence="1">2.8.1.13</ecNumber>
    </recommendedName>
</protein>